<gene>
    <name type="primary">aroH</name>
    <name type="ordered locus">b1704</name>
    <name type="ordered locus">JW1694</name>
</gene>
<reference key="1">
    <citation type="journal article" date="1991" name="Gene">
        <title>Two promoters control the aroH gene of Escherichia coli.</title>
        <authorList>
            <person name="Hudson G.S."/>
            <person name="Rellos P."/>
            <person name="Davidson B.E."/>
        </authorList>
    </citation>
    <scope>NUCLEOTIDE SEQUENCE [GENOMIC DNA]</scope>
</reference>
<reference key="2">
    <citation type="journal article" date="1988" name="J. Bacteriol.">
        <title>Mutational analysis of the catalytic and feedback sites of the tryptophan-sensitive 3-deoxy-D-arabino-heptulosonate-7-phosphate synthase of Escherichia coli.</title>
        <authorList>
            <person name="Ray J.M."/>
            <person name="Yanofsky C."/>
            <person name="Bauerle R."/>
        </authorList>
    </citation>
    <scope>NUCLEOTIDE SEQUENCE [GENOMIC DNA]</scope>
</reference>
<reference key="3">
    <citation type="journal article" date="1996" name="DNA Res.">
        <title>A 570-kb DNA sequence of the Escherichia coli K-12 genome corresponding to the 28.0-40.1 min region on the linkage map.</title>
        <authorList>
            <person name="Aiba H."/>
            <person name="Baba T."/>
            <person name="Fujita K."/>
            <person name="Hayashi K."/>
            <person name="Inada T."/>
            <person name="Isono K."/>
            <person name="Itoh T."/>
            <person name="Kasai H."/>
            <person name="Kashimoto K."/>
            <person name="Kimura S."/>
            <person name="Kitakawa M."/>
            <person name="Kitagawa M."/>
            <person name="Makino K."/>
            <person name="Miki T."/>
            <person name="Mizobuchi K."/>
            <person name="Mori H."/>
            <person name="Mori T."/>
            <person name="Motomura K."/>
            <person name="Nakade S."/>
            <person name="Nakamura Y."/>
            <person name="Nashimoto H."/>
            <person name="Nishio Y."/>
            <person name="Oshima T."/>
            <person name="Saito N."/>
            <person name="Sampei G."/>
            <person name="Seki Y."/>
            <person name="Sivasundaram S."/>
            <person name="Tagami H."/>
            <person name="Takeda J."/>
            <person name="Takemoto K."/>
            <person name="Takeuchi Y."/>
            <person name="Wada C."/>
            <person name="Yamamoto Y."/>
            <person name="Horiuchi T."/>
        </authorList>
    </citation>
    <scope>NUCLEOTIDE SEQUENCE [LARGE SCALE GENOMIC DNA]</scope>
    <source>
        <strain>K12 / W3110 / ATCC 27325 / DSM 5911</strain>
    </source>
</reference>
<reference key="4">
    <citation type="journal article" date="1997" name="Science">
        <title>The complete genome sequence of Escherichia coli K-12.</title>
        <authorList>
            <person name="Blattner F.R."/>
            <person name="Plunkett G. III"/>
            <person name="Bloch C.A."/>
            <person name="Perna N.T."/>
            <person name="Burland V."/>
            <person name="Riley M."/>
            <person name="Collado-Vides J."/>
            <person name="Glasner J.D."/>
            <person name="Rode C.K."/>
            <person name="Mayhew G.F."/>
            <person name="Gregor J."/>
            <person name="Davis N.W."/>
            <person name="Kirkpatrick H.A."/>
            <person name="Goeden M.A."/>
            <person name="Rose D.J."/>
            <person name="Mau B."/>
            <person name="Shao Y."/>
        </authorList>
    </citation>
    <scope>NUCLEOTIDE SEQUENCE [LARGE SCALE GENOMIC DNA]</scope>
    <source>
        <strain>K12 / MG1655 / ATCC 47076</strain>
    </source>
</reference>
<reference key="5">
    <citation type="journal article" date="2006" name="Mol. Syst. Biol.">
        <title>Highly accurate genome sequences of Escherichia coli K-12 strains MG1655 and W3110.</title>
        <authorList>
            <person name="Hayashi K."/>
            <person name="Morooka N."/>
            <person name="Yamamoto Y."/>
            <person name="Fujita K."/>
            <person name="Isono K."/>
            <person name="Choi S."/>
            <person name="Ohtsubo E."/>
            <person name="Baba T."/>
            <person name="Wanner B.L."/>
            <person name="Mori H."/>
            <person name="Horiuchi T."/>
        </authorList>
    </citation>
    <scope>NUCLEOTIDE SEQUENCE [LARGE SCALE GENOMIC DNA]</scope>
    <source>
        <strain>K12 / W3110 / ATCC 27325 / DSM 5911</strain>
    </source>
</reference>
<reference key="6">
    <citation type="journal article" date="1981" name="J. Mol. Biol.">
        <title>Structure and regulation of aroH, the structural gene for the tryptophan-repressible 3-deoxy-D-arabino-heptulosonic acid-7-phosphate synthetase of Escherichia coli.</title>
        <authorList>
            <person name="Zurawski G."/>
            <person name="Gunsalus R.P."/>
            <person name="Brown K.D."/>
            <person name="Yanofsky C."/>
        </authorList>
    </citation>
    <scope>NUCLEOTIDE SEQUENCE [GENOMIC DNA] OF 1-36 AND 232-348</scope>
</reference>
<protein>
    <recommendedName>
        <fullName>Phospho-2-dehydro-3-deoxyheptonate aldolase, Trp-sensitive</fullName>
        <ecNumber>2.5.1.54</ecNumber>
    </recommendedName>
    <alternativeName>
        <fullName>3-deoxy-D-arabino-heptulosonate 7-phosphate synthase</fullName>
    </alternativeName>
    <alternativeName>
        <fullName>DAHP synthase</fullName>
    </alternativeName>
    <alternativeName>
        <fullName>Phospho-2-keto-3-deoxyheptonate aldolase</fullName>
    </alternativeName>
</protein>
<proteinExistence type="evidence at protein level"/>
<sequence length="348" mass="38735">MNRTDELRTARIESLVTPAELALRYPVTPGVATHVTDSRRRIEKILNGEDKRLLVIIGPCSIHDLTAAMEYATRLQSLRNQYQSRLEIVMRTYFEKPRTVVGWKGLISDPDLNGSYRVNHGLELARKLLLQVNELGVPTATEFLDMVTGQFIADLISWGAIGARTTESQIHREMASALSCPVGFKNGTDGNTRIAVDAIRAARASHMFLSPDKNGQMTIYQTSGNPYGHIIMRGGKKPNYHADDIAAACDTLHEFDLPEHLVVDFSHGNCQKQHRRQLEVCEDICQQIRNGSTAIAGIMAESFLREGTQKIVGSQPLTYGQSITDPCLGWEDTERLVEKLASAVDTRF</sequence>
<name>AROH_ECOLI</name>
<dbReference type="EC" id="2.5.1.54"/>
<dbReference type="EMBL" id="M38266">
    <property type="protein sequence ID" value="AAA23497.1"/>
    <property type="molecule type" value="Genomic_DNA"/>
</dbReference>
<dbReference type="EMBL" id="J04221">
    <property type="protein sequence ID" value="AAA23493.1"/>
    <property type="molecule type" value="Genomic_DNA"/>
</dbReference>
<dbReference type="EMBL" id="U00096">
    <property type="protein sequence ID" value="AAC74774.1"/>
    <property type="molecule type" value="Genomic_DNA"/>
</dbReference>
<dbReference type="EMBL" id="AP009048">
    <property type="protein sequence ID" value="BAA15473.1"/>
    <property type="molecule type" value="Genomic_DNA"/>
</dbReference>
<dbReference type="EMBL" id="V00261">
    <property type="protein sequence ID" value="CAA23510.1"/>
    <property type="molecule type" value="Genomic_DNA"/>
</dbReference>
<dbReference type="EMBL" id="X04373">
    <property type="protein sequence ID" value="CAA27956.1"/>
    <property type="molecule type" value="Genomic_DNA"/>
</dbReference>
<dbReference type="PIR" id="H64928">
    <property type="entry name" value="ADECH"/>
</dbReference>
<dbReference type="RefSeq" id="NP_416219.1">
    <property type="nucleotide sequence ID" value="NC_000913.3"/>
</dbReference>
<dbReference type="RefSeq" id="WP_001082229.1">
    <property type="nucleotide sequence ID" value="NZ_SSZK01000001.1"/>
</dbReference>
<dbReference type="SMR" id="P00887"/>
<dbReference type="BioGRID" id="4260296">
    <property type="interactions" value="16"/>
</dbReference>
<dbReference type="BioGRID" id="850589">
    <property type="interactions" value="1"/>
</dbReference>
<dbReference type="DIP" id="DIP-6846N"/>
<dbReference type="FunCoup" id="P00887">
    <property type="interactions" value="325"/>
</dbReference>
<dbReference type="IntAct" id="P00887">
    <property type="interactions" value="5"/>
</dbReference>
<dbReference type="STRING" id="511145.b1704"/>
<dbReference type="jPOST" id="P00887"/>
<dbReference type="PaxDb" id="511145-b1704"/>
<dbReference type="EnsemblBacteria" id="AAC74774">
    <property type="protein sequence ID" value="AAC74774"/>
    <property type="gene ID" value="b1704"/>
</dbReference>
<dbReference type="GeneID" id="946229"/>
<dbReference type="KEGG" id="ecj:JW1694"/>
<dbReference type="KEGG" id="eco:b1704"/>
<dbReference type="KEGG" id="ecoc:C3026_09760"/>
<dbReference type="PATRIC" id="fig|1411691.4.peg.553"/>
<dbReference type="EchoBASE" id="EB0078"/>
<dbReference type="eggNOG" id="COG0722">
    <property type="taxonomic scope" value="Bacteria"/>
</dbReference>
<dbReference type="HOGENOM" id="CLU_030903_0_1_6"/>
<dbReference type="InParanoid" id="P00887"/>
<dbReference type="OMA" id="PCLSWED"/>
<dbReference type="OrthoDB" id="9807331at2"/>
<dbReference type="PhylomeDB" id="P00887"/>
<dbReference type="BioCyc" id="EcoCyc:AROH-MONOMER"/>
<dbReference type="BioCyc" id="MetaCyc:AROH-MONOMER"/>
<dbReference type="UniPathway" id="UPA00053">
    <property type="reaction ID" value="UER00084"/>
</dbReference>
<dbReference type="PRO" id="PR:P00887"/>
<dbReference type="Proteomes" id="UP000000625">
    <property type="component" value="Chromosome"/>
</dbReference>
<dbReference type="GO" id="GO:0005737">
    <property type="term" value="C:cytoplasm"/>
    <property type="evidence" value="ECO:0000314"/>
    <property type="project" value="EcoliWiki"/>
</dbReference>
<dbReference type="GO" id="GO:0003849">
    <property type="term" value="F:3-deoxy-7-phosphoheptulonate synthase activity"/>
    <property type="evidence" value="ECO:0000314"/>
    <property type="project" value="EcoliWiki"/>
</dbReference>
<dbReference type="GO" id="GO:0042802">
    <property type="term" value="F:identical protein binding"/>
    <property type="evidence" value="ECO:0000314"/>
    <property type="project" value="EcoCyc"/>
</dbReference>
<dbReference type="GO" id="GO:0008652">
    <property type="term" value="P:amino acid biosynthetic process"/>
    <property type="evidence" value="ECO:0007669"/>
    <property type="project" value="UniProtKB-KW"/>
</dbReference>
<dbReference type="GO" id="GO:0009073">
    <property type="term" value="P:aromatic amino acid family biosynthetic process"/>
    <property type="evidence" value="ECO:0000314"/>
    <property type="project" value="EcoliWiki"/>
</dbReference>
<dbReference type="GO" id="GO:0009423">
    <property type="term" value="P:chorismate biosynthetic process"/>
    <property type="evidence" value="ECO:0007669"/>
    <property type="project" value="UniProtKB-UniPathway"/>
</dbReference>
<dbReference type="FunFam" id="3.20.20.70:FF:000005">
    <property type="entry name" value="Phospho-2-dehydro-3-deoxyheptonate aldolase"/>
    <property type="match status" value="1"/>
</dbReference>
<dbReference type="Gene3D" id="3.20.20.70">
    <property type="entry name" value="Aldolase class I"/>
    <property type="match status" value="1"/>
</dbReference>
<dbReference type="InterPro" id="IPR013785">
    <property type="entry name" value="Aldolase_TIM"/>
</dbReference>
<dbReference type="InterPro" id="IPR006218">
    <property type="entry name" value="DAHP1/KDSA"/>
</dbReference>
<dbReference type="InterPro" id="IPR006219">
    <property type="entry name" value="DAHP_synth_1"/>
</dbReference>
<dbReference type="NCBIfam" id="TIGR00034">
    <property type="entry name" value="aroFGH"/>
    <property type="match status" value="1"/>
</dbReference>
<dbReference type="NCBIfam" id="NF009395">
    <property type="entry name" value="PRK12755.1"/>
    <property type="match status" value="1"/>
</dbReference>
<dbReference type="NCBIfam" id="NF009396">
    <property type="entry name" value="PRK12756.1"/>
    <property type="match status" value="1"/>
</dbReference>
<dbReference type="PANTHER" id="PTHR21225">
    <property type="entry name" value="PHOSPHO-2-DEHYDRO-3-DEOXYHEPTONATE ALDOLASE DAHP SYNTHETASE"/>
    <property type="match status" value="1"/>
</dbReference>
<dbReference type="PANTHER" id="PTHR21225:SF6">
    <property type="entry name" value="PHOSPHO-2-DEHYDRO-3-DEOXYHEPTONATE ALDOLASE, TRP-SENSITIVE"/>
    <property type="match status" value="1"/>
</dbReference>
<dbReference type="Pfam" id="PF00793">
    <property type="entry name" value="DAHP_synth_1"/>
    <property type="match status" value="1"/>
</dbReference>
<dbReference type="PIRSF" id="PIRSF001361">
    <property type="entry name" value="DAHP_synthase"/>
    <property type="match status" value="1"/>
</dbReference>
<dbReference type="SUPFAM" id="SSF51569">
    <property type="entry name" value="Aldolase"/>
    <property type="match status" value="1"/>
</dbReference>
<evidence type="ECO:0000305" key="1"/>
<keyword id="KW-0028">Amino-acid biosynthesis</keyword>
<keyword id="KW-0057">Aromatic amino acid biosynthesis</keyword>
<keyword id="KW-1185">Reference proteome</keyword>
<keyword id="KW-0808">Transferase</keyword>
<accession>P00887</accession>
<accession>P78301</accession>
<feature type="chain" id="PRO_0000140840" description="Phospho-2-dehydro-3-deoxyheptonate aldolase, Trp-sensitive">
    <location>
        <begin position="1"/>
        <end position="348"/>
    </location>
</feature>
<feature type="sequence conflict" description="In Ref. 2; AAA23493." evidence="1" ref="2">
    <original>RAS</original>
    <variation>AQ</variation>
    <location>
        <begin position="203"/>
        <end position="205"/>
    </location>
</feature>
<feature type="sequence conflict" description="In Ref. 2; AAA23493 and 6; CAA27956." evidence="1" ref="2 6">
    <original>TE</original>
    <variation>RQ</variation>
    <location>
        <begin position="333"/>
        <end position="334"/>
    </location>
</feature>
<feature type="sequence conflict" description="In Ref. 1; AAA23497." evidence="1" ref="1">
    <original>T</original>
    <variation>S</variation>
    <location>
        <position position="333"/>
    </location>
</feature>
<organism>
    <name type="scientific">Escherichia coli (strain K12)</name>
    <dbReference type="NCBI Taxonomy" id="83333"/>
    <lineage>
        <taxon>Bacteria</taxon>
        <taxon>Pseudomonadati</taxon>
        <taxon>Pseudomonadota</taxon>
        <taxon>Gammaproteobacteria</taxon>
        <taxon>Enterobacterales</taxon>
        <taxon>Enterobacteriaceae</taxon>
        <taxon>Escherichia</taxon>
    </lineage>
</organism>
<comment type="function">
    <text>Stereospecific condensation of phosphoenolpyruvate (PEP) and D-erythrose-4-phosphate (E4P) giving rise to 3-deoxy-D-arabino-heptulosonate-7-phosphate (DAHP).</text>
</comment>
<comment type="catalytic activity">
    <reaction>
        <text>D-erythrose 4-phosphate + phosphoenolpyruvate + H2O = 7-phospho-2-dehydro-3-deoxy-D-arabino-heptonate + phosphate</text>
        <dbReference type="Rhea" id="RHEA:14717"/>
        <dbReference type="ChEBI" id="CHEBI:15377"/>
        <dbReference type="ChEBI" id="CHEBI:16897"/>
        <dbReference type="ChEBI" id="CHEBI:43474"/>
        <dbReference type="ChEBI" id="CHEBI:58394"/>
        <dbReference type="ChEBI" id="CHEBI:58702"/>
        <dbReference type="EC" id="2.5.1.54"/>
    </reaction>
</comment>
<comment type="pathway">
    <text>Metabolic intermediate biosynthesis; chorismate biosynthesis; chorismate from D-erythrose 4-phosphate and phosphoenolpyruvate: step 1/7.</text>
</comment>
<comment type="interaction">
    <interactant intactId="EBI-1125143">
        <id>P00887</id>
    </interactant>
    <interactant intactId="EBI-543750">
        <id>P0A6F5</id>
        <label>groEL</label>
    </interactant>
    <organismsDiffer>false</organismsDiffer>
    <experiments>3</experiments>
</comment>
<comment type="miscellaneous">
    <text>There are 3 DAHP synthases, AroH is feedback-inhibited by Trp. The other 2 DAHP synthases are Tyr- and Phe-sensitive, respectively.</text>
</comment>
<comment type="similarity">
    <text evidence="1">Belongs to the class-I DAHP synthase family.</text>
</comment>